<evidence type="ECO:0000255" key="1">
    <source>
        <dbReference type="HAMAP-Rule" id="MF_02245"/>
    </source>
</evidence>
<protein>
    <recommendedName>
        <fullName evidence="1">ClpXP adapter protein SpxH</fullName>
    </recommendedName>
</protein>
<proteinExistence type="inferred from homology"/>
<comment type="function">
    <text evidence="1">Adapter protein required for efficient degradation of Spx by ClpXP under non-stress conditions. Interaction with Spx stabilizes Spx and exposes the C-terminus of Spx for recognition and proteolysis by ClpXP.</text>
</comment>
<comment type="subunit">
    <text evidence="1">Interacts with Spx.</text>
</comment>
<comment type="subcellular location">
    <subcellularLocation>
        <location evidence="1">Cytoplasm</location>
    </subcellularLocation>
</comment>
<comment type="similarity">
    <text evidence="1">Belongs to the SpxH family.</text>
</comment>
<organism>
    <name type="scientific">Bacillus cereus (strain ZK / E33L)</name>
    <dbReference type="NCBI Taxonomy" id="288681"/>
    <lineage>
        <taxon>Bacteria</taxon>
        <taxon>Bacillati</taxon>
        <taxon>Bacillota</taxon>
        <taxon>Bacilli</taxon>
        <taxon>Bacillales</taxon>
        <taxon>Bacillaceae</taxon>
        <taxon>Bacillus</taxon>
        <taxon>Bacillus cereus group</taxon>
    </lineage>
</organism>
<name>SPXH_BACCZ</name>
<accession>Q63EH0</accession>
<sequence>MDKQEAKHINMPSPSTCEHKSVEAYLFIDPLCKDCWEIEPFIIKLWLEYGKYFSIRHIVTGKVDGTNASSHKWNKPANIRFVWEKTTSLHGFSCDGKVHMQEASSTPYLVSMAIKAAELQGRKAGSKFLRKLQEYIFLENVSNPDCELLLACAKDSDIDVEEFKKDLYSASAKKAFQCDLKFTNEMHITEIPSLVFFHANSDEEGIKIAGTYSYDVYVQLLKELVKCEIEPEPLPPLEVLLEATQFISSKEVAFIYDCSKQEIERELKKLQLKRKVQMIDVKCERYWKWIAKEKDLV</sequence>
<feature type="chain" id="PRO_0000278677" description="ClpXP adapter protein SpxH">
    <location>
        <begin position="1"/>
        <end position="297"/>
    </location>
</feature>
<keyword id="KW-0963">Cytoplasm</keyword>
<gene>
    <name evidence="1" type="primary">spxH</name>
    <name type="ordered locus">BCE33L1091</name>
</gene>
<reference key="1">
    <citation type="journal article" date="2006" name="J. Bacteriol.">
        <title>Pathogenomic sequence analysis of Bacillus cereus and Bacillus thuringiensis isolates closely related to Bacillus anthracis.</title>
        <authorList>
            <person name="Han C.S."/>
            <person name="Xie G."/>
            <person name="Challacombe J.F."/>
            <person name="Altherr M.R."/>
            <person name="Bhotika S.S."/>
            <person name="Bruce D."/>
            <person name="Campbell C.S."/>
            <person name="Campbell M.L."/>
            <person name="Chen J."/>
            <person name="Chertkov O."/>
            <person name="Cleland C."/>
            <person name="Dimitrijevic M."/>
            <person name="Doggett N.A."/>
            <person name="Fawcett J.J."/>
            <person name="Glavina T."/>
            <person name="Goodwin L.A."/>
            <person name="Hill K.K."/>
            <person name="Hitchcock P."/>
            <person name="Jackson P.J."/>
            <person name="Keim P."/>
            <person name="Kewalramani A.R."/>
            <person name="Longmire J."/>
            <person name="Lucas S."/>
            <person name="Malfatti S."/>
            <person name="McMurry K."/>
            <person name="Meincke L.J."/>
            <person name="Misra M."/>
            <person name="Moseman B.L."/>
            <person name="Mundt M."/>
            <person name="Munk A.C."/>
            <person name="Okinaka R.T."/>
            <person name="Parson-Quintana B."/>
            <person name="Reilly L.P."/>
            <person name="Richardson P."/>
            <person name="Robinson D.L."/>
            <person name="Rubin E."/>
            <person name="Saunders E."/>
            <person name="Tapia R."/>
            <person name="Tesmer J.G."/>
            <person name="Thayer N."/>
            <person name="Thompson L.S."/>
            <person name="Tice H."/>
            <person name="Ticknor L.O."/>
            <person name="Wills P.L."/>
            <person name="Brettin T.S."/>
            <person name="Gilna P."/>
        </authorList>
    </citation>
    <scope>NUCLEOTIDE SEQUENCE [LARGE SCALE GENOMIC DNA]</scope>
    <source>
        <strain>ZK / E33L</strain>
    </source>
</reference>
<dbReference type="EMBL" id="CP000001">
    <property type="protein sequence ID" value="AAU19155.1"/>
    <property type="molecule type" value="Genomic_DNA"/>
</dbReference>
<dbReference type="RefSeq" id="WP_000360666.1">
    <property type="nucleotide sequence ID" value="NC_006274.1"/>
</dbReference>
<dbReference type="SMR" id="Q63EH0"/>
<dbReference type="KEGG" id="bcz:BCE33L1091"/>
<dbReference type="PATRIC" id="fig|288681.22.peg.4472"/>
<dbReference type="Proteomes" id="UP000002612">
    <property type="component" value="Chromosome"/>
</dbReference>
<dbReference type="GO" id="GO:0005737">
    <property type="term" value="C:cytoplasm"/>
    <property type="evidence" value="ECO:0007669"/>
    <property type="project" value="UniProtKB-SubCell"/>
</dbReference>
<dbReference type="CDD" id="cd03025">
    <property type="entry name" value="DsbA_FrnE_like"/>
    <property type="match status" value="1"/>
</dbReference>
<dbReference type="Gene3D" id="3.40.30.10">
    <property type="entry name" value="Glutaredoxin"/>
    <property type="match status" value="1"/>
</dbReference>
<dbReference type="Gene3D" id="1.10.472.60">
    <property type="entry name" value="putative protein disulfide isomerase domain"/>
    <property type="match status" value="1"/>
</dbReference>
<dbReference type="HAMAP" id="MF_02245">
    <property type="entry name" value="Adapter_SpxH"/>
    <property type="match status" value="1"/>
</dbReference>
<dbReference type="InterPro" id="IPR046404">
    <property type="entry name" value="Adapter_SpxH"/>
</dbReference>
<dbReference type="InterPro" id="IPR036249">
    <property type="entry name" value="Thioredoxin-like_sf"/>
</dbReference>
<dbReference type="PANTHER" id="PTHR13887:SF47">
    <property type="entry name" value="CLPXP ADAPTER PROTEIN SPXH"/>
    <property type="match status" value="1"/>
</dbReference>
<dbReference type="PANTHER" id="PTHR13887">
    <property type="entry name" value="GLUTATHIONE S-TRANSFERASE KAPPA"/>
    <property type="match status" value="1"/>
</dbReference>
<dbReference type="Pfam" id="PF13743">
    <property type="entry name" value="Thioredoxin_5"/>
    <property type="match status" value="1"/>
</dbReference>
<dbReference type="SUPFAM" id="SSF52833">
    <property type="entry name" value="Thioredoxin-like"/>
    <property type="match status" value="1"/>
</dbReference>